<keyword id="KW-0030">Aminoacyl-tRNA synthetase</keyword>
<keyword id="KW-0067">ATP-binding</keyword>
<keyword id="KW-0963">Cytoplasm</keyword>
<keyword id="KW-0436">Ligase</keyword>
<keyword id="KW-0479">Metal-binding</keyword>
<keyword id="KW-0547">Nucleotide-binding</keyword>
<keyword id="KW-0648">Protein biosynthesis</keyword>
<keyword id="KW-0694">RNA-binding</keyword>
<keyword id="KW-0820">tRNA-binding</keyword>
<keyword id="KW-0862">Zinc</keyword>
<evidence type="ECO:0000255" key="1">
    <source>
        <dbReference type="HAMAP-Rule" id="MF_00184"/>
    </source>
</evidence>
<evidence type="ECO:0000255" key="2">
    <source>
        <dbReference type="PROSITE-ProRule" id="PRU01228"/>
    </source>
</evidence>
<protein>
    <recommendedName>
        <fullName evidence="1">Threonine--tRNA ligase</fullName>
        <ecNumber evidence="1">6.1.1.3</ecNumber>
    </recommendedName>
    <alternativeName>
        <fullName evidence="1">Threonyl-tRNA synthetase</fullName>
        <shortName evidence="1">ThrRS</shortName>
    </alternativeName>
</protein>
<organism>
    <name type="scientific">Stenotrophomonas maltophilia (strain R551-3)</name>
    <dbReference type="NCBI Taxonomy" id="391008"/>
    <lineage>
        <taxon>Bacteria</taxon>
        <taxon>Pseudomonadati</taxon>
        <taxon>Pseudomonadota</taxon>
        <taxon>Gammaproteobacteria</taxon>
        <taxon>Lysobacterales</taxon>
        <taxon>Lysobacteraceae</taxon>
        <taxon>Stenotrophomonas</taxon>
        <taxon>Stenotrophomonas maltophilia group</taxon>
    </lineage>
</organism>
<proteinExistence type="inferred from homology"/>
<accession>B4SQH4</accession>
<feature type="chain" id="PRO_1000098616" description="Threonine--tRNA ligase">
    <location>
        <begin position="1"/>
        <end position="633"/>
    </location>
</feature>
<feature type="domain" description="TGS" evidence="2">
    <location>
        <begin position="1"/>
        <end position="61"/>
    </location>
</feature>
<feature type="region of interest" description="Catalytic" evidence="1">
    <location>
        <begin position="243"/>
        <end position="534"/>
    </location>
</feature>
<feature type="binding site" evidence="1">
    <location>
        <position position="334"/>
    </location>
    <ligand>
        <name>Zn(2+)</name>
        <dbReference type="ChEBI" id="CHEBI:29105"/>
    </ligand>
</feature>
<feature type="binding site" evidence="1">
    <location>
        <position position="385"/>
    </location>
    <ligand>
        <name>Zn(2+)</name>
        <dbReference type="ChEBI" id="CHEBI:29105"/>
    </ligand>
</feature>
<feature type="binding site" evidence="1">
    <location>
        <position position="511"/>
    </location>
    <ligand>
        <name>Zn(2+)</name>
        <dbReference type="ChEBI" id="CHEBI:29105"/>
    </ligand>
</feature>
<sequence length="633" mass="71836">MINITLPDGSRREFENPVSVMDVAQSIGAGLAKATIAGSVDGVLVDASDVIDHDASLRIITAKDEEGVEIIRHSSAHLVGHAVKQLYPDVKMVIGPVIAEGFYYDIYSERPFTPEDMAAIEKRMGELIAQDYDVIKKVTPRAEVIEIFKARGEDYKLRLIEDMSDDIQAMGMYYHQEYVDMCRGPHVPNTRFLKAFKLTRISGAYWRGDAQNEQLQRIYGTAWADKKQLEAYIKRIEEAEMRDHRRIGKQQDLFHLQEEAPGLVFWHPKGWALWQVVEQYMRKVYRKTGYGEVRCPQILDVSLWQKSGHWDNYQDAMFFTESEKRTYALKPMNCPGHVQVFNQGLHSYRDLPIRYGEFGACHRNEPSGALHGILRVRGFTQDDGHVFCTENQVEAEVTAFHQQALAVYQHFGFDEIQVKIALRPESRLGDDATWDKAEGALRSALSSNGVEWQELPGEGAFYGPKIEYHLKDAIGRTWQLGTMQVDFMMPGRLGAEYVDENSQKKHPVMLHRAIVGSMERFLGILIEHHAGQFPAWLAPTQVVVANITDAQAEYVSDVTKTLADQGFRVSADLRNEKIGYKIREHTLQRVPYLLVIGDREKENGAVAVRTRSGEDLGSMSLQAFIERLQAEGA</sequence>
<gene>
    <name evidence="1" type="primary">thrS</name>
    <name type="ordered locus">Smal_2805</name>
</gene>
<dbReference type="EC" id="6.1.1.3" evidence="1"/>
<dbReference type="EMBL" id="CP001111">
    <property type="protein sequence ID" value="ACF52505.1"/>
    <property type="molecule type" value="Genomic_DNA"/>
</dbReference>
<dbReference type="RefSeq" id="WP_012511695.1">
    <property type="nucleotide sequence ID" value="NC_011071.1"/>
</dbReference>
<dbReference type="SMR" id="B4SQH4"/>
<dbReference type="STRING" id="391008.Smal_2805"/>
<dbReference type="KEGG" id="smt:Smal_2805"/>
<dbReference type="eggNOG" id="COG0441">
    <property type="taxonomic scope" value="Bacteria"/>
</dbReference>
<dbReference type="HOGENOM" id="CLU_008554_0_1_6"/>
<dbReference type="OrthoDB" id="9802304at2"/>
<dbReference type="Proteomes" id="UP000001867">
    <property type="component" value="Chromosome"/>
</dbReference>
<dbReference type="GO" id="GO:0005829">
    <property type="term" value="C:cytosol"/>
    <property type="evidence" value="ECO:0007669"/>
    <property type="project" value="TreeGrafter"/>
</dbReference>
<dbReference type="GO" id="GO:0005524">
    <property type="term" value="F:ATP binding"/>
    <property type="evidence" value="ECO:0007669"/>
    <property type="project" value="UniProtKB-UniRule"/>
</dbReference>
<dbReference type="GO" id="GO:0046872">
    <property type="term" value="F:metal ion binding"/>
    <property type="evidence" value="ECO:0007669"/>
    <property type="project" value="UniProtKB-KW"/>
</dbReference>
<dbReference type="GO" id="GO:0004829">
    <property type="term" value="F:threonine-tRNA ligase activity"/>
    <property type="evidence" value="ECO:0007669"/>
    <property type="project" value="UniProtKB-UniRule"/>
</dbReference>
<dbReference type="GO" id="GO:0000049">
    <property type="term" value="F:tRNA binding"/>
    <property type="evidence" value="ECO:0007669"/>
    <property type="project" value="UniProtKB-KW"/>
</dbReference>
<dbReference type="GO" id="GO:0006435">
    <property type="term" value="P:threonyl-tRNA aminoacylation"/>
    <property type="evidence" value="ECO:0007669"/>
    <property type="project" value="UniProtKB-UniRule"/>
</dbReference>
<dbReference type="CDD" id="cd01667">
    <property type="entry name" value="TGS_ThrRS"/>
    <property type="match status" value="1"/>
</dbReference>
<dbReference type="CDD" id="cd00860">
    <property type="entry name" value="ThrRS_anticodon"/>
    <property type="match status" value="1"/>
</dbReference>
<dbReference type="CDD" id="cd00771">
    <property type="entry name" value="ThrRS_core"/>
    <property type="match status" value="1"/>
</dbReference>
<dbReference type="FunFam" id="3.10.20.30:FF:000005">
    <property type="entry name" value="Threonine--tRNA ligase"/>
    <property type="match status" value="1"/>
</dbReference>
<dbReference type="FunFam" id="3.30.54.20:FF:000002">
    <property type="entry name" value="Threonine--tRNA ligase"/>
    <property type="match status" value="1"/>
</dbReference>
<dbReference type="FunFam" id="3.30.930.10:FF:000002">
    <property type="entry name" value="Threonine--tRNA ligase"/>
    <property type="match status" value="1"/>
</dbReference>
<dbReference type="FunFam" id="3.40.50.800:FF:000001">
    <property type="entry name" value="Threonine--tRNA ligase"/>
    <property type="match status" value="1"/>
</dbReference>
<dbReference type="FunFam" id="3.30.980.10:FF:000005">
    <property type="entry name" value="Threonyl-tRNA synthetase, mitochondrial"/>
    <property type="match status" value="1"/>
</dbReference>
<dbReference type="Gene3D" id="3.10.20.30">
    <property type="match status" value="1"/>
</dbReference>
<dbReference type="Gene3D" id="3.30.54.20">
    <property type="match status" value="1"/>
</dbReference>
<dbReference type="Gene3D" id="3.40.50.800">
    <property type="entry name" value="Anticodon-binding domain"/>
    <property type="match status" value="1"/>
</dbReference>
<dbReference type="Gene3D" id="3.30.930.10">
    <property type="entry name" value="Bira Bifunctional Protein, Domain 2"/>
    <property type="match status" value="1"/>
</dbReference>
<dbReference type="Gene3D" id="3.30.980.10">
    <property type="entry name" value="Threonyl-trna Synthetase, Chain A, domain 2"/>
    <property type="match status" value="1"/>
</dbReference>
<dbReference type="HAMAP" id="MF_00184">
    <property type="entry name" value="Thr_tRNA_synth"/>
    <property type="match status" value="1"/>
</dbReference>
<dbReference type="InterPro" id="IPR002314">
    <property type="entry name" value="aa-tRNA-synt_IIb"/>
</dbReference>
<dbReference type="InterPro" id="IPR006195">
    <property type="entry name" value="aa-tRNA-synth_II"/>
</dbReference>
<dbReference type="InterPro" id="IPR045864">
    <property type="entry name" value="aa-tRNA-synth_II/BPL/LPL"/>
</dbReference>
<dbReference type="InterPro" id="IPR004154">
    <property type="entry name" value="Anticodon-bd"/>
</dbReference>
<dbReference type="InterPro" id="IPR036621">
    <property type="entry name" value="Anticodon-bd_dom_sf"/>
</dbReference>
<dbReference type="InterPro" id="IPR012675">
    <property type="entry name" value="Beta-grasp_dom_sf"/>
</dbReference>
<dbReference type="InterPro" id="IPR004095">
    <property type="entry name" value="TGS"/>
</dbReference>
<dbReference type="InterPro" id="IPR012676">
    <property type="entry name" value="TGS-like"/>
</dbReference>
<dbReference type="InterPro" id="IPR002320">
    <property type="entry name" value="Thr-tRNA-ligase_IIa"/>
</dbReference>
<dbReference type="InterPro" id="IPR018163">
    <property type="entry name" value="Thr/Ala-tRNA-synth_IIc_edit"/>
</dbReference>
<dbReference type="InterPro" id="IPR047246">
    <property type="entry name" value="ThrRS_anticodon"/>
</dbReference>
<dbReference type="InterPro" id="IPR033728">
    <property type="entry name" value="ThrRS_core"/>
</dbReference>
<dbReference type="InterPro" id="IPR012947">
    <property type="entry name" value="tRNA_SAD"/>
</dbReference>
<dbReference type="NCBIfam" id="TIGR00418">
    <property type="entry name" value="thrS"/>
    <property type="match status" value="1"/>
</dbReference>
<dbReference type="PANTHER" id="PTHR11451:SF44">
    <property type="entry name" value="THREONINE--TRNA LIGASE, CHLOROPLASTIC_MITOCHONDRIAL 2"/>
    <property type="match status" value="1"/>
</dbReference>
<dbReference type="PANTHER" id="PTHR11451">
    <property type="entry name" value="THREONINE-TRNA LIGASE"/>
    <property type="match status" value="1"/>
</dbReference>
<dbReference type="Pfam" id="PF03129">
    <property type="entry name" value="HGTP_anticodon"/>
    <property type="match status" value="1"/>
</dbReference>
<dbReference type="Pfam" id="PF02824">
    <property type="entry name" value="TGS"/>
    <property type="match status" value="1"/>
</dbReference>
<dbReference type="Pfam" id="PF00587">
    <property type="entry name" value="tRNA-synt_2b"/>
    <property type="match status" value="1"/>
</dbReference>
<dbReference type="Pfam" id="PF07973">
    <property type="entry name" value="tRNA_SAD"/>
    <property type="match status" value="1"/>
</dbReference>
<dbReference type="PRINTS" id="PR01047">
    <property type="entry name" value="TRNASYNTHTHR"/>
</dbReference>
<dbReference type="SMART" id="SM00863">
    <property type="entry name" value="tRNA_SAD"/>
    <property type="match status" value="1"/>
</dbReference>
<dbReference type="SUPFAM" id="SSF52954">
    <property type="entry name" value="Class II aaRS ABD-related"/>
    <property type="match status" value="1"/>
</dbReference>
<dbReference type="SUPFAM" id="SSF55681">
    <property type="entry name" value="Class II aaRS and biotin synthetases"/>
    <property type="match status" value="1"/>
</dbReference>
<dbReference type="SUPFAM" id="SSF81271">
    <property type="entry name" value="TGS-like"/>
    <property type="match status" value="1"/>
</dbReference>
<dbReference type="SUPFAM" id="SSF55186">
    <property type="entry name" value="ThrRS/AlaRS common domain"/>
    <property type="match status" value="1"/>
</dbReference>
<dbReference type="PROSITE" id="PS50862">
    <property type="entry name" value="AA_TRNA_LIGASE_II"/>
    <property type="match status" value="1"/>
</dbReference>
<dbReference type="PROSITE" id="PS51880">
    <property type="entry name" value="TGS"/>
    <property type="match status" value="1"/>
</dbReference>
<comment type="function">
    <text evidence="1">Catalyzes the attachment of threonine to tRNA(Thr) in a two-step reaction: L-threonine is first activated by ATP to form Thr-AMP and then transferred to the acceptor end of tRNA(Thr). Also edits incorrectly charged L-seryl-tRNA(Thr).</text>
</comment>
<comment type="catalytic activity">
    <reaction evidence="1">
        <text>tRNA(Thr) + L-threonine + ATP = L-threonyl-tRNA(Thr) + AMP + diphosphate + H(+)</text>
        <dbReference type="Rhea" id="RHEA:24624"/>
        <dbReference type="Rhea" id="RHEA-COMP:9670"/>
        <dbReference type="Rhea" id="RHEA-COMP:9704"/>
        <dbReference type="ChEBI" id="CHEBI:15378"/>
        <dbReference type="ChEBI" id="CHEBI:30616"/>
        <dbReference type="ChEBI" id="CHEBI:33019"/>
        <dbReference type="ChEBI" id="CHEBI:57926"/>
        <dbReference type="ChEBI" id="CHEBI:78442"/>
        <dbReference type="ChEBI" id="CHEBI:78534"/>
        <dbReference type="ChEBI" id="CHEBI:456215"/>
        <dbReference type="EC" id="6.1.1.3"/>
    </reaction>
</comment>
<comment type="cofactor">
    <cofactor evidence="1">
        <name>Zn(2+)</name>
        <dbReference type="ChEBI" id="CHEBI:29105"/>
    </cofactor>
    <text evidence="1">Binds 1 zinc ion per subunit.</text>
</comment>
<comment type="subunit">
    <text evidence="1">Homodimer.</text>
</comment>
<comment type="subcellular location">
    <subcellularLocation>
        <location evidence="1">Cytoplasm</location>
    </subcellularLocation>
</comment>
<comment type="similarity">
    <text evidence="1">Belongs to the class-II aminoacyl-tRNA synthetase family.</text>
</comment>
<name>SYT_STRM5</name>
<reference key="1">
    <citation type="submission" date="2008-06" db="EMBL/GenBank/DDBJ databases">
        <title>Complete sequence of Stenotrophomonas maltophilia R551-3.</title>
        <authorList>
            <consortium name="US DOE Joint Genome Institute"/>
            <person name="Lucas S."/>
            <person name="Copeland A."/>
            <person name="Lapidus A."/>
            <person name="Glavina del Rio T."/>
            <person name="Dalin E."/>
            <person name="Tice H."/>
            <person name="Pitluck S."/>
            <person name="Chain P."/>
            <person name="Malfatti S."/>
            <person name="Shin M."/>
            <person name="Vergez L."/>
            <person name="Lang D."/>
            <person name="Schmutz J."/>
            <person name="Larimer F."/>
            <person name="Land M."/>
            <person name="Hauser L."/>
            <person name="Kyrpides N."/>
            <person name="Mikhailova N."/>
            <person name="Taghavi S."/>
            <person name="Monchy S."/>
            <person name="Newman L."/>
            <person name="Vangronsveld J."/>
            <person name="van der Lelie D."/>
            <person name="Richardson P."/>
        </authorList>
    </citation>
    <scope>NUCLEOTIDE SEQUENCE [LARGE SCALE GENOMIC DNA]</scope>
    <source>
        <strain>R551-3</strain>
    </source>
</reference>